<feature type="chain" id="PRO_0000207105" description="Acetoacetate decarboxylase">
    <location>
        <begin position="1"/>
        <end position="247"/>
    </location>
</feature>
<feature type="active site" description="Schiff-base intermediate with acetoacetate" evidence="1">
    <location>
        <position position="116"/>
    </location>
</feature>
<comment type="function">
    <text evidence="1">Catalyzes the conversion of acetoacetate to acetone and carbon dioxide.</text>
</comment>
<comment type="catalytic activity">
    <reaction evidence="1">
        <text>acetoacetate + H(+) = acetone + CO2</text>
        <dbReference type="Rhea" id="RHEA:19729"/>
        <dbReference type="ChEBI" id="CHEBI:13705"/>
        <dbReference type="ChEBI" id="CHEBI:15347"/>
        <dbReference type="ChEBI" id="CHEBI:15378"/>
        <dbReference type="ChEBI" id="CHEBI:16526"/>
        <dbReference type="EC" id="4.1.1.4"/>
    </reaction>
</comment>
<comment type="similarity">
    <text evidence="1">Belongs to the ADC family.</text>
</comment>
<sequence length="247" mass="27489">MDIDTVRKTAFAMPLTSPAYPPGPYRFINREFFIITYRTDPARLRAMVPEPLEVPEPLVSYEFIRMADSTGFGDYTESGQVIPVTFEGKPGTYTLAMYLDDHPPLAGGREMWGFPKKLATPRLQTSKDTLLGTLDYGPVRVATGTMGYKHKELDLAAQQQRLARPNFLLKIIPHVDGRTARICELSRNTMEDIVMKGAWTGPASLELAHHALAPVADLPVLEIVEARHLIADLTLGMGEVVFDYLAK</sequence>
<proteinExistence type="inferred from homology"/>
<accession>Q8XR10</accession>
<evidence type="ECO:0000255" key="1">
    <source>
        <dbReference type="HAMAP-Rule" id="MF_00597"/>
    </source>
</evidence>
<dbReference type="EC" id="4.1.1.4" evidence="1"/>
<dbReference type="EMBL" id="AL646053">
    <property type="protein sequence ID" value="CAD18209.1"/>
    <property type="molecule type" value="Genomic_DNA"/>
</dbReference>
<dbReference type="RefSeq" id="WP_011004347.1">
    <property type="nucleotide sequence ID" value="NC_003296.1"/>
</dbReference>
<dbReference type="SMR" id="Q8XR10"/>
<dbReference type="STRING" id="267608.RSp1058"/>
<dbReference type="EnsemblBacteria" id="CAD18209">
    <property type="protein sequence ID" value="CAD18209"/>
    <property type="gene ID" value="RSp1058"/>
</dbReference>
<dbReference type="KEGG" id="rso:RSp1058"/>
<dbReference type="eggNOG" id="COG4689">
    <property type="taxonomic scope" value="Bacteria"/>
</dbReference>
<dbReference type="HOGENOM" id="CLU_077089_0_0_4"/>
<dbReference type="Proteomes" id="UP000001436">
    <property type="component" value="Plasmid megaplasmid Rsp"/>
</dbReference>
<dbReference type="GO" id="GO:0047602">
    <property type="term" value="F:acetoacetate decarboxylase activity"/>
    <property type="evidence" value="ECO:0007669"/>
    <property type="project" value="UniProtKB-UniRule"/>
</dbReference>
<dbReference type="Gene3D" id="2.40.400.10">
    <property type="entry name" value="Acetoacetate decarboxylase-like"/>
    <property type="match status" value="1"/>
</dbReference>
<dbReference type="HAMAP" id="MF_00597">
    <property type="entry name" value="ADC"/>
    <property type="match status" value="1"/>
</dbReference>
<dbReference type="InterPro" id="IPR010451">
    <property type="entry name" value="Acetoacetate_decarboxylase"/>
</dbReference>
<dbReference type="InterPro" id="IPR023653">
    <property type="entry name" value="Acetoacetate_decarboxylase_bac"/>
</dbReference>
<dbReference type="InterPro" id="IPR023375">
    <property type="entry name" value="ADC_dom_sf"/>
</dbReference>
<dbReference type="NCBIfam" id="NF002614">
    <property type="entry name" value="PRK02265.1"/>
    <property type="match status" value="1"/>
</dbReference>
<dbReference type="Pfam" id="PF06314">
    <property type="entry name" value="ADC"/>
    <property type="match status" value="1"/>
</dbReference>
<dbReference type="SUPFAM" id="SSF160104">
    <property type="entry name" value="Acetoacetate decarboxylase-like"/>
    <property type="match status" value="1"/>
</dbReference>
<organism>
    <name type="scientific">Ralstonia nicotianae (strain ATCC BAA-1114 / GMI1000)</name>
    <name type="common">Ralstonia solanacearum</name>
    <dbReference type="NCBI Taxonomy" id="267608"/>
    <lineage>
        <taxon>Bacteria</taxon>
        <taxon>Pseudomonadati</taxon>
        <taxon>Pseudomonadota</taxon>
        <taxon>Betaproteobacteria</taxon>
        <taxon>Burkholderiales</taxon>
        <taxon>Burkholderiaceae</taxon>
        <taxon>Ralstonia</taxon>
        <taxon>Ralstonia solanacearum species complex</taxon>
    </lineage>
</organism>
<name>ADC_RALN1</name>
<keyword id="KW-0210">Decarboxylase</keyword>
<keyword id="KW-0456">Lyase</keyword>
<keyword id="KW-0614">Plasmid</keyword>
<keyword id="KW-1185">Reference proteome</keyword>
<keyword id="KW-0704">Schiff base</keyword>
<gene>
    <name evidence="1" type="primary">adc</name>
    <name type="ordered locus">RSp1058</name>
    <name type="ORF">RS02395</name>
</gene>
<geneLocation type="plasmid">
    <name>megaplasmid Rsp</name>
</geneLocation>
<reference key="1">
    <citation type="journal article" date="2002" name="Nature">
        <title>Genome sequence of the plant pathogen Ralstonia solanacearum.</title>
        <authorList>
            <person name="Salanoubat M."/>
            <person name="Genin S."/>
            <person name="Artiguenave F."/>
            <person name="Gouzy J."/>
            <person name="Mangenot S."/>
            <person name="Arlat M."/>
            <person name="Billault A."/>
            <person name="Brottier P."/>
            <person name="Camus J.-C."/>
            <person name="Cattolico L."/>
            <person name="Chandler M."/>
            <person name="Choisne N."/>
            <person name="Claudel-Renard C."/>
            <person name="Cunnac S."/>
            <person name="Demange N."/>
            <person name="Gaspin C."/>
            <person name="Lavie M."/>
            <person name="Moisan A."/>
            <person name="Robert C."/>
            <person name="Saurin W."/>
            <person name="Schiex T."/>
            <person name="Siguier P."/>
            <person name="Thebault P."/>
            <person name="Whalen M."/>
            <person name="Wincker P."/>
            <person name="Levy M."/>
            <person name="Weissenbach J."/>
            <person name="Boucher C.A."/>
        </authorList>
    </citation>
    <scope>NUCLEOTIDE SEQUENCE [LARGE SCALE GENOMIC DNA]</scope>
    <source>
        <strain>ATCC BAA-1114 / GMI1000</strain>
    </source>
</reference>
<protein>
    <recommendedName>
        <fullName evidence="1">Acetoacetate decarboxylase</fullName>
        <shortName evidence="1">AAD</shortName>
        <shortName evidence="1">ADC</shortName>
        <ecNumber evidence="1">4.1.1.4</ecNumber>
    </recommendedName>
</protein>